<sequence>MKVISSIQELRDQLRGQNRTAFVPTMGNLHEGHLSLMRLARQHGDPVVASIFVNRLQFGPNEDFDKYPRTLQDDIEKLQQNNVYVLFAPTERDMYPEPQEYRVLPPDDLGGILEGEFRPGFFAGVCTVVTKLMSCVQPRVAVFGKKDYQQLMIVRRMCQQLALPVEIIAAETVRDEDGLALSSRNRYLTTDERKEAPELAKTLQRVRDSVLGGERDLGKLEQHAHTHLAERGWVPDYIAIRRRANLIAPSAAELEAGEPLVVLAAAKLGATRLIDNLEI</sequence>
<dbReference type="EC" id="6.3.2.1" evidence="1"/>
<dbReference type="EMBL" id="CP000458">
    <property type="protein sequence ID" value="ABK09192.1"/>
    <property type="molecule type" value="Genomic_DNA"/>
</dbReference>
<dbReference type="RefSeq" id="WP_011545961.1">
    <property type="nucleotide sequence ID" value="NC_008542.1"/>
</dbReference>
<dbReference type="SMR" id="A0K9L5"/>
<dbReference type="KEGG" id="bch:Bcen2424_2442"/>
<dbReference type="HOGENOM" id="CLU_047148_0_0_4"/>
<dbReference type="UniPathway" id="UPA00028">
    <property type="reaction ID" value="UER00005"/>
</dbReference>
<dbReference type="GO" id="GO:0005829">
    <property type="term" value="C:cytosol"/>
    <property type="evidence" value="ECO:0007669"/>
    <property type="project" value="TreeGrafter"/>
</dbReference>
<dbReference type="GO" id="GO:0005524">
    <property type="term" value="F:ATP binding"/>
    <property type="evidence" value="ECO:0007669"/>
    <property type="project" value="UniProtKB-KW"/>
</dbReference>
<dbReference type="GO" id="GO:0004592">
    <property type="term" value="F:pantoate-beta-alanine ligase activity"/>
    <property type="evidence" value="ECO:0007669"/>
    <property type="project" value="UniProtKB-UniRule"/>
</dbReference>
<dbReference type="GO" id="GO:0015940">
    <property type="term" value="P:pantothenate biosynthetic process"/>
    <property type="evidence" value="ECO:0007669"/>
    <property type="project" value="UniProtKB-UniRule"/>
</dbReference>
<dbReference type="CDD" id="cd00560">
    <property type="entry name" value="PanC"/>
    <property type="match status" value="1"/>
</dbReference>
<dbReference type="Gene3D" id="3.40.50.620">
    <property type="entry name" value="HUPs"/>
    <property type="match status" value="1"/>
</dbReference>
<dbReference type="Gene3D" id="3.30.1300.10">
    <property type="entry name" value="Pantoate-beta-alanine ligase, C-terminal domain"/>
    <property type="match status" value="1"/>
</dbReference>
<dbReference type="HAMAP" id="MF_00158">
    <property type="entry name" value="PanC"/>
    <property type="match status" value="1"/>
</dbReference>
<dbReference type="InterPro" id="IPR004821">
    <property type="entry name" value="Cyt_trans-like"/>
</dbReference>
<dbReference type="InterPro" id="IPR003721">
    <property type="entry name" value="Pantoate_ligase"/>
</dbReference>
<dbReference type="InterPro" id="IPR042176">
    <property type="entry name" value="Pantoate_ligase_C"/>
</dbReference>
<dbReference type="InterPro" id="IPR014729">
    <property type="entry name" value="Rossmann-like_a/b/a_fold"/>
</dbReference>
<dbReference type="NCBIfam" id="TIGR00125">
    <property type="entry name" value="cyt_tran_rel"/>
    <property type="match status" value="1"/>
</dbReference>
<dbReference type="NCBIfam" id="TIGR00018">
    <property type="entry name" value="panC"/>
    <property type="match status" value="1"/>
</dbReference>
<dbReference type="PANTHER" id="PTHR21299">
    <property type="entry name" value="CYTIDYLATE KINASE/PANTOATE-BETA-ALANINE LIGASE"/>
    <property type="match status" value="1"/>
</dbReference>
<dbReference type="PANTHER" id="PTHR21299:SF1">
    <property type="entry name" value="PANTOATE--BETA-ALANINE LIGASE"/>
    <property type="match status" value="1"/>
</dbReference>
<dbReference type="Pfam" id="PF02569">
    <property type="entry name" value="Pantoate_ligase"/>
    <property type="match status" value="1"/>
</dbReference>
<dbReference type="SUPFAM" id="SSF52374">
    <property type="entry name" value="Nucleotidylyl transferase"/>
    <property type="match status" value="1"/>
</dbReference>
<keyword id="KW-0067">ATP-binding</keyword>
<keyword id="KW-0963">Cytoplasm</keyword>
<keyword id="KW-0436">Ligase</keyword>
<keyword id="KW-0547">Nucleotide-binding</keyword>
<keyword id="KW-0566">Pantothenate biosynthesis</keyword>
<evidence type="ECO:0000255" key="1">
    <source>
        <dbReference type="HAMAP-Rule" id="MF_00158"/>
    </source>
</evidence>
<reference key="1">
    <citation type="submission" date="2006-08" db="EMBL/GenBank/DDBJ databases">
        <title>Complete sequence of chromosome 1 of Burkholderia cenocepacia HI2424.</title>
        <authorList>
            <person name="Copeland A."/>
            <person name="Lucas S."/>
            <person name="Lapidus A."/>
            <person name="Barry K."/>
            <person name="Detter J.C."/>
            <person name="Glavina del Rio T."/>
            <person name="Hammon N."/>
            <person name="Israni S."/>
            <person name="Pitluck S."/>
            <person name="Chain P."/>
            <person name="Malfatti S."/>
            <person name="Shin M."/>
            <person name="Vergez L."/>
            <person name="Schmutz J."/>
            <person name="Larimer F."/>
            <person name="Land M."/>
            <person name="Hauser L."/>
            <person name="Kyrpides N."/>
            <person name="Kim E."/>
            <person name="LiPuma J.J."/>
            <person name="Gonzalez C.F."/>
            <person name="Konstantinidis K."/>
            <person name="Tiedje J.M."/>
            <person name="Richardson P."/>
        </authorList>
    </citation>
    <scope>NUCLEOTIDE SEQUENCE [LARGE SCALE GENOMIC DNA]</scope>
    <source>
        <strain>HI2424</strain>
    </source>
</reference>
<proteinExistence type="inferred from homology"/>
<gene>
    <name evidence="1" type="primary">panC</name>
    <name type="ordered locus">Bcen2424_2442</name>
</gene>
<feature type="chain" id="PRO_0000305413" description="Pantothenate synthetase">
    <location>
        <begin position="1"/>
        <end position="279"/>
    </location>
</feature>
<feature type="active site" description="Proton donor" evidence="1">
    <location>
        <position position="33"/>
    </location>
</feature>
<feature type="binding site" evidence="1">
    <location>
        <begin position="26"/>
        <end position="33"/>
    </location>
    <ligand>
        <name>ATP</name>
        <dbReference type="ChEBI" id="CHEBI:30616"/>
    </ligand>
</feature>
<feature type="binding site" evidence="1">
    <location>
        <position position="57"/>
    </location>
    <ligand>
        <name>(R)-pantoate</name>
        <dbReference type="ChEBI" id="CHEBI:15980"/>
    </ligand>
</feature>
<feature type="binding site" evidence="1">
    <location>
        <position position="57"/>
    </location>
    <ligand>
        <name>beta-alanine</name>
        <dbReference type="ChEBI" id="CHEBI:57966"/>
    </ligand>
</feature>
<feature type="binding site" evidence="1">
    <location>
        <begin position="144"/>
        <end position="147"/>
    </location>
    <ligand>
        <name>ATP</name>
        <dbReference type="ChEBI" id="CHEBI:30616"/>
    </ligand>
</feature>
<feature type="binding site" evidence="1">
    <location>
        <position position="150"/>
    </location>
    <ligand>
        <name>(R)-pantoate</name>
        <dbReference type="ChEBI" id="CHEBI:15980"/>
    </ligand>
</feature>
<feature type="binding site" evidence="1">
    <location>
        <position position="173"/>
    </location>
    <ligand>
        <name>ATP</name>
        <dbReference type="ChEBI" id="CHEBI:30616"/>
    </ligand>
</feature>
<feature type="binding site" evidence="1">
    <location>
        <begin position="181"/>
        <end position="184"/>
    </location>
    <ligand>
        <name>ATP</name>
        <dbReference type="ChEBI" id="CHEBI:30616"/>
    </ligand>
</feature>
<accession>A0K9L5</accession>
<organism>
    <name type="scientific">Burkholderia cenocepacia (strain HI2424)</name>
    <dbReference type="NCBI Taxonomy" id="331272"/>
    <lineage>
        <taxon>Bacteria</taxon>
        <taxon>Pseudomonadati</taxon>
        <taxon>Pseudomonadota</taxon>
        <taxon>Betaproteobacteria</taxon>
        <taxon>Burkholderiales</taxon>
        <taxon>Burkholderiaceae</taxon>
        <taxon>Burkholderia</taxon>
        <taxon>Burkholderia cepacia complex</taxon>
    </lineage>
</organism>
<name>PANC_BURCH</name>
<protein>
    <recommendedName>
        <fullName evidence="1">Pantothenate synthetase</fullName>
        <shortName evidence="1">PS</shortName>
        <ecNumber evidence="1">6.3.2.1</ecNumber>
    </recommendedName>
    <alternativeName>
        <fullName evidence="1">Pantoate--beta-alanine ligase</fullName>
    </alternativeName>
    <alternativeName>
        <fullName evidence="1">Pantoate-activating enzyme</fullName>
    </alternativeName>
</protein>
<comment type="function">
    <text evidence="1">Catalyzes the condensation of pantoate with beta-alanine in an ATP-dependent reaction via a pantoyl-adenylate intermediate.</text>
</comment>
<comment type="catalytic activity">
    <reaction evidence="1">
        <text>(R)-pantoate + beta-alanine + ATP = (R)-pantothenate + AMP + diphosphate + H(+)</text>
        <dbReference type="Rhea" id="RHEA:10912"/>
        <dbReference type="ChEBI" id="CHEBI:15378"/>
        <dbReference type="ChEBI" id="CHEBI:15980"/>
        <dbReference type="ChEBI" id="CHEBI:29032"/>
        <dbReference type="ChEBI" id="CHEBI:30616"/>
        <dbReference type="ChEBI" id="CHEBI:33019"/>
        <dbReference type="ChEBI" id="CHEBI:57966"/>
        <dbReference type="ChEBI" id="CHEBI:456215"/>
        <dbReference type="EC" id="6.3.2.1"/>
    </reaction>
</comment>
<comment type="pathway">
    <text evidence="1">Cofactor biosynthesis; (R)-pantothenate biosynthesis; (R)-pantothenate from (R)-pantoate and beta-alanine: step 1/1.</text>
</comment>
<comment type="subunit">
    <text evidence="1">Homodimer.</text>
</comment>
<comment type="subcellular location">
    <subcellularLocation>
        <location evidence="1">Cytoplasm</location>
    </subcellularLocation>
</comment>
<comment type="miscellaneous">
    <text evidence="1">The reaction proceeds by a bi uni uni bi ping pong mechanism.</text>
</comment>
<comment type="similarity">
    <text evidence="1">Belongs to the pantothenate synthetase family.</text>
</comment>